<proteinExistence type="inferred from homology"/>
<comment type="catalytic activity">
    <reaction evidence="1">
        <text>D-arabinose 5-phosphate + phosphoenolpyruvate + H2O = 3-deoxy-alpha-D-manno-2-octulosonate-8-phosphate + phosphate</text>
        <dbReference type="Rhea" id="RHEA:14053"/>
        <dbReference type="ChEBI" id="CHEBI:15377"/>
        <dbReference type="ChEBI" id="CHEBI:43474"/>
        <dbReference type="ChEBI" id="CHEBI:57693"/>
        <dbReference type="ChEBI" id="CHEBI:58702"/>
        <dbReference type="ChEBI" id="CHEBI:85985"/>
        <dbReference type="EC" id="2.5.1.55"/>
    </reaction>
</comment>
<comment type="pathway">
    <text evidence="1">Carbohydrate biosynthesis; 3-deoxy-D-manno-octulosonate biosynthesis; 3-deoxy-D-manno-octulosonate from D-ribulose 5-phosphate: step 2/3.</text>
</comment>
<comment type="pathway">
    <text evidence="1">Bacterial outer membrane biogenesis; lipopolysaccharide biosynthesis.</text>
</comment>
<comment type="subcellular location">
    <subcellularLocation>
        <location evidence="1">Cytoplasm</location>
    </subcellularLocation>
</comment>
<comment type="similarity">
    <text evidence="1">Belongs to the KdsA family.</text>
</comment>
<feature type="chain" id="PRO_0000304475" description="2-dehydro-3-deoxyphosphooctonate aldolase">
    <location>
        <begin position="1"/>
        <end position="281"/>
    </location>
</feature>
<protein>
    <recommendedName>
        <fullName evidence="1">2-dehydro-3-deoxyphosphooctonate aldolase</fullName>
        <ecNumber evidence="1">2.5.1.55</ecNumber>
    </recommendedName>
    <alternativeName>
        <fullName evidence="1">3-deoxy-D-manno-octulosonic acid 8-phosphate synthase</fullName>
    </alternativeName>
    <alternativeName>
        <fullName evidence="1">KDO-8-phosphate synthase</fullName>
        <shortName evidence="1">KDO 8-P synthase</shortName>
        <shortName evidence="1">KDOPS</shortName>
    </alternativeName>
    <alternativeName>
        <fullName evidence="1">Phospho-2-dehydro-3-deoxyoctonate aldolase</fullName>
    </alternativeName>
</protein>
<evidence type="ECO:0000255" key="1">
    <source>
        <dbReference type="HAMAP-Rule" id="MF_00056"/>
    </source>
</evidence>
<dbReference type="EC" id="2.5.1.55" evidence="1"/>
<dbReference type="EMBL" id="CP000058">
    <property type="protein sequence ID" value="AAZ33194.1"/>
    <property type="molecule type" value="Genomic_DNA"/>
</dbReference>
<dbReference type="RefSeq" id="WP_004666021.1">
    <property type="nucleotide sequence ID" value="NC_005773.3"/>
</dbReference>
<dbReference type="SMR" id="Q48F78"/>
<dbReference type="GeneID" id="61868786"/>
<dbReference type="KEGG" id="psp:PSPPH_3821"/>
<dbReference type="eggNOG" id="COG2877">
    <property type="taxonomic scope" value="Bacteria"/>
</dbReference>
<dbReference type="HOGENOM" id="CLU_036666_0_0_6"/>
<dbReference type="UniPathway" id="UPA00030"/>
<dbReference type="UniPathway" id="UPA00357">
    <property type="reaction ID" value="UER00474"/>
</dbReference>
<dbReference type="Proteomes" id="UP000000551">
    <property type="component" value="Chromosome"/>
</dbReference>
<dbReference type="GO" id="GO:0005737">
    <property type="term" value="C:cytoplasm"/>
    <property type="evidence" value="ECO:0007669"/>
    <property type="project" value="UniProtKB-SubCell"/>
</dbReference>
<dbReference type="GO" id="GO:0008676">
    <property type="term" value="F:3-deoxy-8-phosphooctulonate synthase activity"/>
    <property type="evidence" value="ECO:0007669"/>
    <property type="project" value="UniProtKB-UniRule"/>
</dbReference>
<dbReference type="GO" id="GO:0019294">
    <property type="term" value="P:keto-3-deoxy-D-manno-octulosonic acid biosynthetic process"/>
    <property type="evidence" value="ECO:0007669"/>
    <property type="project" value="UniProtKB-UniRule"/>
</dbReference>
<dbReference type="Gene3D" id="3.20.20.70">
    <property type="entry name" value="Aldolase class I"/>
    <property type="match status" value="1"/>
</dbReference>
<dbReference type="HAMAP" id="MF_00056">
    <property type="entry name" value="KDO8P_synth"/>
    <property type="match status" value="1"/>
</dbReference>
<dbReference type="InterPro" id="IPR013785">
    <property type="entry name" value="Aldolase_TIM"/>
</dbReference>
<dbReference type="InterPro" id="IPR006218">
    <property type="entry name" value="DAHP1/KDSA"/>
</dbReference>
<dbReference type="InterPro" id="IPR006269">
    <property type="entry name" value="KDO8P_synthase"/>
</dbReference>
<dbReference type="NCBIfam" id="TIGR01362">
    <property type="entry name" value="KDO8P_synth"/>
    <property type="match status" value="1"/>
</dbReference>
<dbReference type="NCBIfam" id="NF003543">
    <property type="entry name" value="PRK05198.1"/>
    <property type="match status" value="1"/>
</dbReference>
<dbReference type="NCBIfam" id="NF009109">
    <property type="entry name" value="PRK12457.1"/>
    <property type="match status" value="1"/>
</dbReference>
<dbReference type="PANTHER" id="PTHR21057">
    <property type="entry name" value="PHOSPHO-2-DEHYDRO-3-DEOXYHEPTONATE ALDOLASE"/>
    <property type="match status" value="1"/>
</dbReference>
<dbReference type="Pfam" id="PF00793">
    <property type="entry name" value="DAHP_synth_1"/>
    <property type="match status" value="1"/>
</dbReference>
<dbReference type="SUPFAM" id="SSF51569">
    <property type="entry name" value="Aldolase"/>
    <property type="match status" value="1"/>
</dbReference>
<sequence>MAQKTIRVGSIEIANDKPMVLFGGMNVLESRDMAMQVCEEYVRVTEKLGIPYVFKASFDKANRSSVNSYRGPGLEEGMRIFEEIKRTFNVPLITDVHEPHQAAVVAEVCDIIQLPAFLSRQTDLVVAMAKTGAVINIKKAQFLAPQEMKHILTKCEEAGNDQLILCERGSSFGYNNLVVDMLGFGVMKQFEYPILFDVTHALQMPGGRSDSAGGRRAQVLDLAKAGISQNLAGLFLEAHPDPDNAKCDGPCALRLDKLEPFLAQLKSLDELVKSFPIVETA</sequence>
<keyword id="KW-0963">Cytoplasm</keyword>
<keyword id="KW-0448">Lipopolysaccharide biosynthesis</keyword>
<keyword id="KW-0808">Transferase</keyword>
<name>KDSA_PSE14</name>
<accession>Q48F78</accession>
<gene>
    <name evidence="1" type="primary">kdsA</name>
    <name type="ordered locus">PSPPH_3821</name>
</gene>
<organism>
    <name type="scientific">Pseudomonas savastanoi pv. phaseolicola (strain 1448A / Race 6)</name>
    <name type="common">Pseudomonas syringae pv. phaseolicola (strain 1448A / Race 6)</name>
    <dbReference type="NCBI Taxonomy" id="264730"/>
    <lineage>
        <taxon>Bacteria</taxon>
        <taxon>Pseudomonadati</taxon>
        <taxon>Pseudomonadota</taxon>
        <taxon>Gammaproteobacteria</taxon>
        <taxon>Pseudomonadales</taxon>
        <taxon>Pseudomonadaceae</taxon>
        <taxon>Pseudomonas</taxon>
    </lineage>
</organism>
<reference key="1">
    <citation type="journal article" date="2005" name="J. Bacteriol.">
        <title>Whole-genome sequence analysis of Pseudomonas syringae pv. phaseolicola 1448A reveals divergence among pathovars in genes involved in virulence and transposition.</title>
        <authorList>
            <person name="Joardar V."/>
            <person name="Lindeberg M."/>
            <person name="Jackson R.W."/>
            <person name="Selengut J."/>
            <person name="Dodson R."/>
            <person name="Brinkac L.M."/>
            <person name="Daugherty S.C."/>
            <person name="DeBoy R.T."/>
            <person name="Durkin A.S."/>
            <person name="Gwinn Giglio M."/>
            <person name="Madupu R."/>
            <person name="Nelson W.C."/>
            <person name="Rosovitz M.J."/>
            <person name="Sullivan S.A."/>
            <person name="Crabtree J."/>
            <person name="Creasy T."/>
            <person name="Davidsen T.M."/>
            <person name="Haft D.H."/>
            <person name="Zafar N."/>
            <person name="Zhou L."/>
            <person name="Halpin R."/>
            <person name="Holley T."/>
            <person name="Khouri H.M."/>
            <person name="Feldblyum T.V."/>
            <person name="White O."/>
            <person name="Fraser C.M."/>
            <person name="Chatterjee A.K."/>
            <person name="Cartinhour S."/>
            <person name="Schneider D."/>
            <person name="Mansfield J.W."/>
            <person name="Collmer A."/>
            <person name="Buell R."/>
        </authorList>
    </citation>
    <scope>NUCLEOTIDE SEQUENCE [LARGE SCALE GENOMIC DNA]</scope>
    <source>
        <strain>1448A / Race 6</strain>
    </source>
</reference>